<gene>
    <name type="primary">KLK1</name>
</gene>
<name>KLK1_PAPHA</name>
<comment type="function">
    <text>Glandular kallikreins cleave Met-Lys and Arg-Ser bonds in kininogen to release Lys-bradykinin.</text>
</comment>
<comment type="catalytic activity">
    <reaction>
        <text>Preferential cleavage of Arg-|-Xaa bonds in small molecule substrates. Highly selective action to release kallidin (lysyl-bradykinin) from kininogen involves hydrolysis of Met-|-Xaa or Leu-|-Xaa.</text>
        <dbReference type="EC" id="3.4.21.35"/>
    </reaction>
</comment>
<comment type="similarity">
    <text evidence="3">Belongs to the peptidase S1 family. Kallikrein subfamily.</text>
</comment>
<dbReference type="EC" id="3.4.21.35"/>
<dbReference type="EMBL" id="L43121">
    <property type="protein sequence ID" value="AAA73523.1"/>
    <property type="molecule type" value="mRNA"/>
</dbReference>
<dbReference type="SMR" id="Q28773"/>
<dbReference type="GlyCosmos" id="Q28773">
    <property type="glycosylation" value="6 sites, No reported glycans"/>
</dbReference>
<dbReference type="BRENDA" id="3.4.21.35">
    <property type="organism ID" value="4522"/>
</dbReference>
<dbReference type="GO" id="GO:0030141">
    <property type="term" value="C:secretory granule"/>
    <property type="evidence" value="ECO:0007669"/>
    <property type="project" value="TreeGrafter"/>
</dbReference>
<dbReference type="GO" id="GO:0004252">
    <property type="term" value="F:serine-type endopeptidase activity"/>
    <property type="evidence" value="ECO:0007669"/>
    <property type="project" value="UniProtKB-EC"/>
</dbReference>
<dbReference type="GO" id="GO:0003073">
    <property type="term" value="P:regulation of systemic arterial blood pressure"/>
    <property type="evidence" value="ECO:0007669"/>
    <property type="project" value="TreeGrafter"/>
</dbReference>
<dbReference type="GO" id="GO:0031638">
    <property type="term" value="P:zymogen activation"/>
    <property type="evidence" value="ECO:0007669"/>
    <property type="project" value="TreeGrafter"/>
</dbReference>
<dbReference type="CDD" id="cd00190">
    <property type="entry name" value="Tryp_SPc"/>
    <property type="match status" value="1"/>
</dbReference>
<dbReference type="FunFam" id="2.40.10.10:FF:000042">
    <property type="entry name" value="Kallikrein 1-related peptidase C9"/>
    <property type="match status" value="1"/>
</dbReference>
<dbReference type="Gene3D" id="2.40.10.10">
    <property type="entry name" value="Trypsin-like serine proteases"/>
    <property type="match status" value="2"/>
</dbReference>
<dbReference type="InterPro" id="IPR009003">
    <property type="entry name" value="Peptidase_S1_PA"/>
</dbReference>
<dbReference type="InterPro" id="IPR043504">
    <property type="entry name" value="Peptidase_S1_PA_chymotrypsin"/>
</dbReference>
<dbReference type="InterPro" id="IPR001314">
    <property type="entry name" value="Peptidase_S1A"/>
</dbReference>
<dbReference type="InterPro" id="IPR001254">
    <property type="entry name" value="Trypsin_dom"/>
</dbReference>
<dbReference type="InterPro" id="IPR018114">
    <property type="entry name" value="TRYPSIN_HIS"/>
</dbReference>
<dbReference type="InterPro" id="IPR033116">
    <property type="entry name" value="TRYPSIN_SER"/>
</dbReference>
<dbReference type="PANTHER" id="PTHR24271:SF47">
    <property type="entry name" value="KALLIKREIN-1"/>
    <property type="match status" value="1"/>
</dbReference>
<dbReference type="PANTHER" id="PTHR24271">
    <property type="entry name" value="KALLIKREIN-RELATED"/>
    <property type="match status" value="1"/>
</dbReference>
<dbReference type="Pfam" id="PF00089">
    <property type="entry name" value="Trypsin"/>
    <property type="match status" value="1"/>
</dbReference>
<dbReference type="PRINTS" id="PR00722">
    <property type="entry name" value="CHYMOTRYPSIN"/>
</dbReference>
<dbReference type="SMART" id="SM00020">
    <property type="entry name" value="Tryp_SPc"/>
    <property type="match status" value="1"/>
</dbReference>
<dbReference type="SUPFAM" id="SSF50494">
    <property type="entry name" value="Trypsin-like serine proteases"/>
    <property type="match status" value="1"/>
</dbReference>
<dbReference type="PROSITE" id="PS50240">
    <property type="entry name" value="TRYPSIN_DOM"/>
    <property type="match status" value="1"/>
</dbReference>
<dbReference type="PROSITE" id="PS00134">
    <property type="entry name" value="TRYPSIN_HIS"/>
    <property type="match status" value="1"/>
</dbReference>
<dbReference type="PROSITE" id="PS00135">
    <property type="entry name" value="TRYPSIN_SER"/>
    <property type="match status" value="1"/>
</dbReference>
<organism>
    <name type="scientific">Papio hamadryas</name>
    <name type="common">Hamadryas baboon</name>
    <dbReference type="NCBI Taxonomy" id="9557"/>
    <lineage>
        <taxon>Eukaryota</taxon>
        <taxon>Metazoa</taxon>
        <taxon>Chordata</taxon>
        <taxon>Craniata</taxon>
        <taxon>Vertebrata</taxon>
        <taxon>Euteleostomi</taxon>
        <taxon>Mammalia</taxon>
        <taxon>Eutheria</taxon>
        <taxon>Euarchontoglires</taxon>
        <taxon>Primates</taxon>
        <taxon>Haplorrhini</taxon>
        <taxon>Catarrhini</taxon>
        <taxon>Cercopithecidae</taxon>
        <taxon>Cercopithecinae</taxon>
        <taxon>Papio</taxon>
    </lineage>
</organism>
<protein>
    <recommendedName>
        <fullName>Kallikrein-1</fullName>
        <ecNumber>3.4.21.35</ecNumber>
    </recommendedName>
    <alternativeName>
        <fullName>Kidney/pancreas/salivary gland kallikrein</fullName>
    </alternativeName>
    <alternativeName>
        <fullName>Tissue kallikrein</fullName>
    </alternativeName>
</protein>
<accession>Q28773</accession>
<proteinExistence type="evidence at transcript level"/>
<evidence type="ECO:0000250" key="1"/>
<evidence type="ECO:0000255" key="2"/>
<evidence type="ECO:0000255" key="3">
    <source>
        <dbReference type="PROSITE-ProRule" id="PRU00274"/>
    </source>
</evidence>
<evidence type="ECO:0000305" key="4"/>
<keyword id="KW-1015">Disulfide bond</keyword>
<keyword id="KW-0325">Glycoprotein</keyword>
<keyword id="KW-0378">Hydrolase</keyword>
<keyword id="KW-0645">Protease</keyword>
<keyword id="KW-0720">Serine protease</keyword>
<keyword id="KW-0732">Signal</keyword>
<keyword id="KW-0865">Zymogen</keyword>
<sequence>MWFLVLCLALSLGGTGAAPPIQSRIVGGWECSQPWQAALYHFSTFQCGGILVHPQWVLTAAHCIGDNYQLWLGRHNLFDDEDTAQFVHVSESFPHPCFNMSLLKNHTRQADEDYSHDLMLLRLTQPAEITDAVQVVELPTQEPEVGSTCLASGWGSIEPENFSYPDDLQCVDLKILPNDKCAKAHTQKVTEFMLCAGHLEGGKDTCVGDSGGPLTCDGVLQGVTSWGYIPCGSPNKPAVFVRVLSYVKWIEDTIAENS</sequence>
<reference key="1">
    <citation type="submission" date="1995-07" db="EMBL/GenBank/DDBJ databases">
        <title>Characterization of the baboon glandular kallikrein locus.</title>
        <authorList>
            <person name="Perelygina L.M."/>
            <person name="Kammerer C.M."/>
            <person name="Henkel R.D."/>
        </authorList>
    </citation>
    <scope>NUCLEOTIDE SEQUENCE [MRNA]</scope>
    <source>
        <tissue>Pancreas</tissue>
    </source>
</reference>
<feature type="signal peptide" evidence="1">
    <location>
        <begin position="1"/>
        <end position="18"/>
    </location>
</feature>
<feature type="propeptide" id="PRO_0000027927" description="Activation peptide" evidence="4">
    <location>
        <begin position="19"/>
        <end position="24"/>
    </location>
</feature>
<feature type="chain" id="PRO_0000027928" description="Kallikrein-1">
    <location>
        <begin position="25"/>
        <end position="258"/>
    </location>
</feature>
<feature type="domain" description="Peptidase S1" evidence="3">
    <location>
        <begin position="25"/>
        <end position="255"/>
    </location>
</feature>
<feature type="active site" description="Charge relay system" evidence="1">
    <location>
        <position position="62"/>
    </location>
</feature>
<feature type="active site" description="Charge relay system" evidence="1">
    <location>
        <position position="117"/>
    </location>
</feature>
<feature type="active site" description="Charge relay system" evidence="1">
    <location>
        <position position="210"/>
    </location>
</feature>
<feature type="glycosylation site" description="O-linked (GalNAc...) serine" evidence="1">
    <location>
        <position position="90"/>
    </location>
</feature>
<feature type="glycosylation site" description="N-linked (GlcNAc...) asparagine" evidence="2">
    <location>
        <position position="99"/>
    </location>
</feature>
<feature type="glycosylation site" description="O-linked (GalNAc...) serine" evidence="1">
    <location>
        <position position="101"/>
    </location>
</feature>
<feature type="glycosylation site" description="N-linked (GlcNAc...) asparagine" evidence="2">
    <location>
        <position position="105"/>
    </location>
</feature>
<feature type="glycosylation site" description="N-linked (GlcNAc...) asparagine" evidence="2">
    <location>
        <position position="161"/>
    </location>
</feature>
<feature type="glycosylation site" description="O-linked (GalNAc...) serine" evidence="1">
    <location>
        <position position="163"/>
    </location>
</feature>
<feature type="disulfide bond" evidence="3">
    <location>
        <begin position="31"/>
        <end position="170"/>
    </location>
</feature>
<feature type="disulfide bond" evidence="3">
    <location>
        <begin position="47"/>
        <end position="63"/>
    </location>
</feature>
<feature type="disulfide bond" evidence="3">
    <location>
        <begin position="149"/>
        <end position="216"/>
    </location>
</feature>
<feature type="disulfide bond" evidence="3">
    <location>
        <begin position="181"/>
        <end position="195"/>
    </location>
</feature>
<feature type="disulfide bond" evidence="3">
    <location>
        <begin position="206"/>
        <end position="231"/>
    </location>
</feature>